<gene>
    <name type="ORF">DDB_G0286591</name>
</gene>
<protein>
    <recommendedName>
        <fullName>Uncharacterized protein DDB_G0286591</fullName>
    </recommendedName>
</protein>
<keyword id="KW-1185">Reference proteome</keyword>
<reference key="1">
    <citation type="journal article" date="2005" name="Nature">
        <title>The genome of the social amoeba Dictyostelium discoideum.</title>
        <authorList>
            <person name="Eichinger L."/>
            <person name="Pachebat J.A."/>
            <person name="Gloeckner G."/>
            <person name="Rajandream M.A."/>
            <person name="Sucgang R."/>
            <person name="Berriman M."/>
            <person name="Song J."/>
            <person name="Olsen R."/>
            <person name="Szafranski K."/>
            <person name="Xu Q."/>
            <person name="Tunggal B."/>
            <person name="Kummerfeld S."/>
            <person name="Madera M."/>
            <person name="Konfortov B.A."/>
            <person name="Rivero F."/>
            <person name="Bankier A.T."/>
            <person name="Lehmann R."/>
            <person name="Hamlin N."/>
            <person name="Davies R."/>
            <person name="Gaudet P."/>
            <person name="Fey P."/>
            <person name="Pilcher K."/>
            <person name="Chen G."/>
            <person name="Saunders D."/>
            <person name="Sodergren E.J."/>
            <person name="Davis P."/>
            <person name="Kerhornou A."/>
            <person name="Nie X."/>
            <person name="Hall N."/>
            <person name="Anjard C."/>
            <person name="Hemphill L."/>
            <person name="Bason N."/>
            <person name="Farbrother P."/>
            <person name="Desany B."/>
            <person name="Just E."/>
            <person name="Morio T."/>
            <person name="Rost R."/>
            <person name="Churcher C.M."/>
            <person name="Cooper J."/>
            <person name="Haydock S."/>
            <person name="van Driessche N."/>
            <person name="Cronin A."/>
            <person name="Goodhead I."/>
            <person name="Muzny D.M."/>
            <person name="Mourier T."/>
            <person name="Pain A."/>
            <person name="Lu M."/>
            <person name="Harper D."/>
            <person name="Lindsay R."/>
            <person name="Hauser H."/>
            <person name="James K.D."/>
            <person name="Quiles M."/>
            <person name="Madan Babu M."/>
            <person name="Saito T."/>
            <person name="Buchrieser C."/>
            <person name="Wardroper A."/>
            <person name="Felder M."/>
            <person name="Thangavelu M."/>
            <person name="Johnson D."/>
            <person name="Knights A."/>
            <person name="Loulseged H."/>
            <person name="Mungall K.L."/>
            <person name="Oliver K."/>
            <person name="Price C."/>
            <person name="Quail M.A."/>
            <person name="Urushihara H."/>
            <person name="Hernandez J."/>
            <person name="Rabbinowitsch E."/>
            <person name="Steffen D."/>
            <person name="Sanders M."/>
            <person name="Ma J."/>
            <person name="Kohara Y."/>
            <person name="Sharp S."/>
            <person name="Simmonds M.N."/>
            <person name="Spiegler S."/>
            <person name="Tivey A."/>
            <person name="Sugano S."/>
            <person name="White B."/>
            <person name="Walker D."/>
            <person name="Woodward J.R."/>
            <person name="Winckler T."/>
            <person name="Tanaka Y."/>
            <person name="Shaulsky G."/>
            <person name="Schleicher M."/>
            <person name="Weinstock G.M."/>
            <person name="Rosenthal A."/>
            <person name="Cox E.C."/>
            <person name="Chisholm R.L."/>
            <person name="Gibbs R.A."/>
            <person name="Loomis W.F."/>
            <person name="Platzer M."/>
            <person name="Kay R.R."/>
            <person name="Williams J.G."/>
            <person name="Dear P.H."/>
            <person name="Noegel A.A."/>
            <person name="Barrell B.G."/>
            <person name="Kuspa A."/>
        </authorList>
    </citation>
    <scope>NUCLEOTIDE SEQUENCE [LARGE SCALE GENOMIC DNA]</scope>
    <source>
        <strain>AX4</strain>
    </source>
</reference>
<evidence type="ECO:0000256" key="1">
    <source>
        <dbReference type="SAM" id="MobiDB-lite"/>
    </source>
</evidence>
<dbReference type="EMBL" id="AAFI02000089">
    <property type="protein sequence ID" value="EAL64051.1"/>
    <property type="molecule type" value="Genomic_DNA"/>
</dbReference>
<dbReference type="RefSeq" id="XP_637553.1">
    <property type="nucleotide sequence ID" value="XM_632461.1"/>
</dbReference>
<dbReference type="PaxDb" id="44689-DDB0187027"/>
<dbReference type="EnsemblProtists" id="EAL64051">
    <property type="protein sequence ID" value="EAL64051"/>
    <property type="gene ID" value="DDB_G0286591"/>
</dbReference>
<dbReference type="GeneID" id="8625692"/>
<dbReference type="KEGG" id="ddi:DDB_G0286591"/>
<dbReference type="dictyBase" id="DDB_G0286591"/>
<dbReference type="VEuPathDB" id="AmoebaDB:DDB_G0286591"/>
<dbReference type="HOGENOM" id="CLU_355815_0_0_1"/>
<dbReference type="InParanoid" id="Q54LK8"/>
<dbReference type="OMA" id="THEGRNG"/>
<dbReference type="PRO" id="PR:Q54LK8"/>
<dbReference type="Proteomes" id="UP000002195">
    <property type="component" value="Chromosome 4"/>
</dbReference>
<sequence length="789" mass="89138">MKDKNINSTSFSISKASKAINSYLQLFPEQQWNEVIKITLLFGIDCIQEHFALSTPRIDQLRNIIIHPESSPLDSILTKTPLKNNIINNNQNFNNKINHQHNHNFKYQQDENNNTDDEQEQEQEQQQKQNEIINKITTPIKTPSPPPPPQTSQTSQTSSTSFSIKSNNKTNNNNNNNNNNNNNNNNPFSTITPIHKNHQNSISTSSSKQLRSSLKNTPSKFAFFTSSTSSENNNNNNKNINNGNNNNNNDGGDINRNDSSSNNNNNTHNSTLFIDDDDGDNNDEINDENDINSNNLTFSSSTKSKKINNNNNSIDSNNTNINNNNNNYNNSINKLSGRESKVEFNEDRNQYSIYSRGDTSSSNNSDLIFENNNNNNSSIYNESATQVEIFYDKNGQPINHLYQEFQFQQHQNGDQNNNSQFLDESMLKSNNSSNNNNNNKNNNNNNNNNNNNNNNNNNNSSSNRNSSINNGNNQSSLFYNSASTNQNNNNNNITTSLNYKVISSPLKNLNLNPTTTNEQISKSVNFDRNQNQKSPFLNNTSMPNINFNEQSQQQSQNQYYQQQQQQQQQQSNNSMNQSINYKDINPSFLSSTPLEFNDTVDTSGSSLKYSTSSNNSKGFSNISNNSKKIFDKSNFNLGSMGNSSFGMSNFNSTSFGASTGGASHLTHTFHNNGNSDGDDDQSNNSNSLFYTPRSTHIMNSMNSNFNHHHNNNNQLFNNSGSNKQMGFPIPPNAVPIHNHTHHHYHNGKGNNTDQELEIIDLEDQPTRFNNKNNNNSNGFTSNKRFYNQH</sequence>
<name>Y7027_DICDI</name>
<organism>
    <name type="scientific">Dictyostelium discoideum</name>
    <name type="common">Social amoeba</name>
    <dbReference type="NCBI Taxonomy" id="44689"/>
    <lineage>
        <taxon>Eukaryota</taxon>
        <taxon>Amoebozoa</taxon>
        <taxon>Evosea</taxon>
        <taxon>Eumycetozoa</taxon>
        <taxon>Dictyostelia</taxon>
        <taxon>Dictyosteliales</taxon>
        <taxon>Dictyosteliaceae</taxon>
        <taxon>Dictyostelium</taxon>
    </lineage>
</organism>
<accession>Q54LK8</accession>
<feature type="chain" id="PRO_0000348512" description="Uncharacterized protein DDB_G0286591">
    <location>
        <begin position="1"/>
        <end position="789"/>
    </location>
</feature>
<feature type="region of interest" description="Disordered" evidence="1">
    <location>
        <begin position="107"/>
        <end position="326"/>
    </location>
</feature>
<feature type="region of interest" description="Disordered" evidence="1">
    <location>
        <begin position="426"/>
        <end position="491"/>
    </location>
</feature>
<feature type="region of interest" description="Disordered" evidence="1">
    <location>
        <begin position="523"/>
        <end position="625"/>
    </location>
</feature>
<feature type="region of interest" description="Disordered" evidence="1">
    <location>
        <begin position="666"/>
        <end position="751"/>
    </location>
</feature>
<feature type="region of interest" description="Disordered" evidence="1">
    <location>
        <begin position="765"/>
        <end position="789"/>
    </location>
</feature>
<feature type="compositionally biased region" description="Acidic residues" evidence="1">
    <location>
        <begin position="113"/>
        <end position="123"/>
    </location>
</feature>
<feature type="compositionally biased region" description="Low complexity" evidence="1">
    <location>
        <begin position="124"/>
        <end position="141"/>
    </location>
</feature>
<feature type="compositionally biased region" description="Low complexity" evidence="1">
    <location>
        <begin position="151"/>
        <end position="194"/>
    </location>
</feature>
<feature type="compositionally biased region" description="Low complexity" evidence="1">
    <location>
        <begin position="201"/>
        <end position="213"/>
    </location>
</feature>
<feature type="compositionally biased region" description="Low complexity" evidence="1">
    <location>
        <begin position="225"/>
        <end position="270"/>
    </location>
</feature>
<feature type="compositionally biased region" description="Acidic residues" evidence="1">
    <location>
        <begin position="274"/>
        <end position="290"/>
    </location>
</feature>
<feature type="compositionally biased region" description="Low complexity" evidence="1">
    <location>
        <begin position="291"/>
        <end position="326"/>
    </location>
</feature>
<feature type="compositionally biased region" description="Low complexity" evidence="1">
    <location>
        <begin position="429"/>
        <end position="491"/>
    </location>
</feature>
<feature type="compositionally biased region" description="Polar residues" evidence="1">
    <location>
        <begin position="523"/>
        <end position="549"/>
    </location>
</feature>
<feature type="compositionally biased region" description="Low complexity" evidence="1">
    <location>
        <begin position="550"/>
        <end position="581"/>
    </location>
</feature>
<feature type="compositionally biased region" description="Low complexity" evidence="1">
    <location>
        <begin position="602"/>
        <end position="617"/>
    </location>
</feature>
<feature type="compositionally biased region" description="Low complexity" evidence="1">
    <location>
        <begin position="696"/>
        <end position="722"/>
    </location>
</feature>
<feature type="compositionally biased region" description="Low complexity" evidence="1">
    <location>
        <begin position="766"/>
        <end position="789"/>
    </location>
</feature>
<proteinExistence type="predicted"/>